<accession>B5ELU2</accession>
<organism>
    <name type="scientific">Acidithiobacillus ferrooxidans (strain ATCC 53993 / BNL-5-31)</name>
    <name type="common">Leptospirillum ferrooxidans (ATCC 53993)</name>
    <dbReference type="NCBI Taxonomy" id="380394"/>
    <lineage>
        <taxon>Bacteria</taxon>
        <taxon>Pseudomonadati</taxon>
        <taxon>Pseudomonadota</taxon>
        <taxon>Acidithiobacillia</taxon>
        <taxon>Acidithiobacillales</taxon>
        <taxon>Acidithiobacillaceae</taxon>
        <taxon>Acidithiobacillus</taxon>
    </lineage>
</organism>
<sequence>MKFIDEVRIHVASGNGGHGAVSFRREKFIPFGGPDGGDGGRGGSVYLVAQASLNTLIDFRYQRRYRAENGHGGAGRQMTGRAGHDLEIKVPVGTLVYDDDTHELLGDLRFEGERLLIARSGRGGHGNLFYKSSTNRAPRQFEKGGAGEERDLRLELRLLADVGLLGLPNAGKSTLIRAVSAARPKVADYPFTTLYPNLGVVRVAAHESFVLADIPGLIPGASEGAGLGTRFLKHLSRTRLLLHLVDMAPVDGSDPAMNIRALEMELAAYSPTLAARPRWLVVNKSDLLPGEEAEARFQQICTALQWESPAFLISAASGAGCEALVYAIWQALPDLPPAADPTQTEDWGDESDAGERLENWEGDDLDADWEEEQV</sequence>
<feature type="chain" id="PRO_0000385659" description="GTPase Obg">
    <location>
        <begin position="1"/>
        <end position="374"/>
    </location>
</feature>
<feature type="domain" description="Obg" evidence="2">
    <location>
        <begin position="1"/>
        <end position="159"/>
    </location>
</feature>
<feature type="domain" description="OBG-type G" evidence="1">
    <location>
        <begin position="160"/>
        <end position="333"/>
    </location>
</feature>
<feature type="region of interest" description="Disordered" evidence="3">
    <location>
        <begin position="337"/>
        <end position="374"/>
    </location>
</feature>
<feature type="compositionally biased region" description="Acidic residues" evidence="3">
    <location>
        <begin position="360"/>
        <end position="374"/>
    </location>
</feature>
<feature type="binding site" evidence="1">
    <location>
        <begin position="166"/>
        <end position="173"/>
    </location>
    <ligand>
        <name>GTP</name>
        <dbReference type="ChEBI" id="CHEBI:37565"/>
    </ligand>
</feature>
<feature type="binding site" evidence="1">
    <location>
        <position position="173"/>
    </location>
    <ligand>
        <name>Mg(2+)</name>
        <dbReference type="ChEBI" id="CHEBI:18420"/>
    </ligand>
</feature>
<feature type="binding site" evidence="1">
    <location>
        <begin position="191"/>
        <end position="195"/>
    </location>
    <ligand>
        <name>GTP</name>
        <dbReference type="ChEBI" id="CHEBI:37565"/>
    </ligand>
</feature>
<feature type="binding site" evidence="1">
    <location>
        <position position="193"/>
    </location>
    <ligand>
        <name>Mg(2+)</name>
        <dbReference type="ChEBI" id="CHEBI:18420"/>
    </ligand>
</feature>
<feature type="binding site" evidence="1">
    <location>
        <begin position="213"/>
        <end position="216"/>
    </location>
    <ligand>
        <name>GTP</name>
        <dbReference type="ChEBI" id="CHEBI:37565"/>
    </ligand>
</feature>
<feature type="binding site" evidence="1">
    <location>
        <begin position="283"/>
        <end position="286"/>
    </location>
    <ligand>
        <name>GTP</name>
        <dbReference type="ChEBI" id="CHEBI:37565"/>
    </ligand>
</feature>
<feature type="binding site" evidence="1">
    <location>
        <begin position="314"/>
        <end position="316"/>
    </location>
    <ligand>
        <name>GTP</name>
        <dbReference type="ChEBI" id="CHEBI:37565"/>
    </ligand>
</feature>
<name>OBG_ACIF5</name>
<proteinExistence type="inferred from homology"/>
<reference key="1">
    <citation type="submission" date="2008-08" db="EMBL/GenBank/DDBJ databases">
        <title>Complete sequence of Acidithiobacillus ferrooxidans ATCC 53993.</title>
        <authorList>
            <person name="Lucas S."/>
            <person name="Copeland A."/>
            <person name="Lapidus A."/>
            <person name="Glavina del Rio T."/>
            <person name="Dalin E."/>
            <person name="Tice H."/>
            <person name="Bruce D."/>
            <person name="Goodwin L."/>
            <person name="Pitluck S."/>
            <person name="Sims D."/>
            <person name="Brettin T."/>
            <person name="Detter J.C."/>
            <person name="Han C."/>
            <person name="Kuske C.R."/>
            <person name="Larimer F."/>
            <person name="Land M."/>
            <person name="Hauser L."/>
            <person name="Kyrpides N."/>
            <person name="Lykidis A."/>
            <person name="Borole A.P."/>
        </authorList>
    </citation>
    <scope>NUCLEOTIDE SEQUENCE [LARGE SCALE GENOMIC DNA]</scope>
    <source>
        <strain>ATCC 53993 / BNL-5-31</strain>
    </source>
</reference>
<dbReference type="EC" id="3.6.5.-" evidence="1"/>
<dbReference type="EMBL" id="CP001132">
    <property type="protein sequence ID" value="ACH82714.1"/>
    <property type="molecule type" value="Genomic_DNA"/>
</dbReference>
<dbReference type="SMR" id="B5ELU2"/>
<dbReference type="KEGG" id="afe:Lferr_0460"/>
<dbReference type="eggNOG" id="COG0536">
    <property type="taxonomic scope" value="Bacteria"/>
</dbReference>
<dbReference type="HOGENOM" id="CLU_011747_2_0_6"/>
<dbReference type="GO" id="GO:0005737">
    <property type="term" value="C:cytoplasm"/>
    <property type="evidence" value="ECO:0007669"/>
    <property type="project" value="UniProtKB-SubCell"/>
</dbReference>
<dbReference type="GO" id="GO:0005525">
    <property type="term" value="F:GTP binding"/>
    <property type="evidence" value="ECO:0007669"/>
    <property type="project" value="UniProtKB-UniRule"/>
</dbReference>
<dbReference type="GO" id="GO:0003924">
    <property type="term" value="F:GTPase activity"/>
    <property type="evidence" value="ECO:0007669"/>
    <property type="project" value="UniProtKB-UniRule"/>
</dbReference>
<dbReference type="GO" id="GO:0000287">
    <property type="term" value="F:magnesium ion binding"/>
    <property type="evidence" value="ECO:0007669"/>
    <property type="project" value="InterPro"/>
</dbReference>
<dbReference type="GO" id="GO:0042254">
    <property type="term" value="P:ribosome biogenesis"/>
    <property type="evidence" value="ECO:0007669"/>
    <property type="project" value="UniProtKB-UniRule"/>
</dbReference>
<dbReference type="CDD" id="cd01898">
    <property type="entry name" value="Obg"/>
    <property type="match status" value="1"/>
</dbReference>
<dbReference type="FunFam" id="2.70.210.12:FF:000001">
    <property type="entry name" value="GTPase Obg"/>
    <property type="match status" value="1"/>
</dbReference>
<dbReference type="Gene3D" id="2.70.210.12">
    <property type="entry name" value="GTP1/OBG domain"/>
    <property type="match status" value="1"/>
</dbReference>
<dbReference type="Gene3D" id="3.40.50.300">
    <property type="entry name" value="P-loop containing nucleotide triphosphate hydrolases"/>
    <property type="match status" value="1"/>
</dbReference>
<dbReference type="HAMAP" id="MF_01454">
    <property type="entry name" value="GTPase_Obg"/>
    <property type="match status" value="1"/>
</dbReference>
<dbReference type="InterPro" id="IPR031167">
    <property type="entry name" value="G_OBG"/>
</dbReference>
<dbReference type="InterPro" id="IPR006073">
    <property type="entry name" value="GTP-bd"/>
</dbReference>
<dbReference type="InterPro" id="IPR014100">
    <property type="entry name" value="GTP-bd_Obg/CgtA"/>
</dbReference>
<dbReference type="InterPro" id="IPR006074">
    <property type="entry name" value="GTP1-OBG_CS"/>
</dbReference>
<dbReference type="InterPro" id="IPR006169">
    <property type="entry name" value="GTP1_OBG_dom"/>
</dbReference>
<dbReference type="InterPro" id="IPR036726">
    <property type="entry name" value="GTP1_OBG_dom_sf"/>
</dbReference>
<dbReference type="InterPro" id="IPR045086">
    <property type="entry name" value="OBG_GTPase"/>
</dbReference>
<dbReference type="InterPro" id="IPR027417">
    <property type="entry name" value="P-loop_NTPase"/>
</dbReference>
<dbReference type="NCBIfam" id="TIGR02729">
    <property type="entry name" value="Obg_CgtA"/>
    <property type="match status" value="1"/>
</dbReference>
<dbReference type="NCBIfam" id="NF008955">
    <property type="entry name" value="PRK12297.1"/>
    <property type="match status" value="1"/>
</dbReference>
<dbReference type="NCBIfam" id="NF008956">
    <property type="entry name" value="PRK12299.1"/>
    <property type="match status" value="1"/>
</dbReference>
<dbReference type="PANTHER" id="PTHR11702">
    <property type="entry name" value="DEVELOPMENTALLY REGULATED GTP-BINDING PROTEIN-RELATED"/>
    <property type="match status" value="1"/>
</dbReference>
<dbReference type="PANTHER" id="PTHR11702:SF31">
    <property type="entry name" value="MITOCHONDRIAL RIBOSOME-ASSOCIATED GTPASE 2"/>
    <property type="match status" value="1"/>
</dbReference>
<dbReference type="Pfam" id="PF01018">
    <property type="entry name" value="GTP1_OBG"/>
    <property type="match status" value="1"/>
</dbReference>
<dbReference type="Pfam" id="PF01926">
    <property type="entry name" value="MMR_HSR1"/>
    <property type="match status" value="1"/>
</dbReference>
<dbReference type="PIRSF" id="PIRSF002401">
    <property type="entry name" value="GTP_bd_Obg/CgtA"/>
    <property type="match status" value="1"/>
</dbReference>
<dbReference type="PRINTS" id="PR00326">
    <property type="entry name" value="GTP1OBG"/>
</dbReference>
<dbReference type="SUPFAM" id="SSF82051">
    <property type="entry name" value="Obg GTP-binding protein N-terminal domain"/>
    <property type="match status" value="1"/>
</dbReference>
<dbReference type="SUPFAM" id="SSF52540">
    <property type="entry name" value="P-loop containing nucleoside triphosphate hydrolases"/>
    <property type="match status" value="1"/>
</dbReference>
<dbReference type="PROSITE" id="PS51710">
    <property type="entry name" value="G_OBG"/>
    <property type="match status" value="1"/>
</dbReference>
<dbReference type="PROSITE" id="PS00905">
    <property type="entry name" value="GTP1_OBG"/>
    <property type="match status" value="1"/>
</dbReference>
<dbReference type="PROSITE" id="PS51883">
    <property type="entry name" value="OBG"/>
    <property type="match status" value="1"/>
</dbReference>
<comment type="function">
    <text evidence="1">An essential GTPase which binds GTP, GDP and possibly (p)ppGpp with moderate affinity, with high nucleotide exchange rates and a fairly low GTP hydrolysis rate. Plays a role in control of the cell cycle, stress response, ribosome biogenesis and in those bacteria that undergo differentiation, in morphogenesis control.</text>
</comment>
<comment type="cofactor">
    <cofactor evidence="1">
        <name>Mg(2+)</name>
        <dbReference type="ChEBI" id="CHEBI:18420"/>
    </cofactor>
</comment>
<comment type="subunit">
    <text evidence="1">Monomer.</text>
</comment>
<comment type="subcellular location">
    <subcellularLocation>
        <location evidence="1">Cytoplasm</location>
    </subcellularLocation>
</comment>
<comment type="similarity">
    <text evidence="1">Belongs to the TRAFAC class OBG-HflX-like GTPase superfamily. OBG GTPase family.</text>
</comment>
<keyword id="KW-0963">Cytoplasm</keyword>
<keyword id="KW-0342">GTP-binding</keyword>
<keyword id="KW-0378">Hydrolase</keyword>
<keyword id="KW-0460">Magnesium</keyword>
<keyword id="KW-0479">Metal-binding</keyword>
<keyword id="KW-0547">Nucleotide-binding</keyword>
<gene>
    <name evidence="1" type="primary">obg</name>
    <name type="ordered locus">Lferr_0460</name>
</gene>
<evidence type="ECO:0000255" key="1">
    <source>
        <dbReference type="HAMAP-Rule" id="MF_01454"/>
    </source>
</evidence>
<evidence type="ECO:0000255" key="2">
    <source>
        <dbReference type="PROSITE-ProRule" id="PRU01231"/>
    </source>
</evidence>
<evidence type="ECO:0000256" key="3">
    <source>
        <dbReference type="SAM" id="MobiDB-lite"/>
    </source>
</evidence>
<protein>
    <recommendedName>
        <fullName evidence="1">GTPase Obg</fullName>
        <ecNumber evidence="1">3.6.5.-</ecNumber>
    </recommendedName>
    <alternativeName>
        <fullName evidence="1">GTP-binding protein Obg</fullName>
    </alternativeName>
</protein>